<name>SDND_SORAA</name>
<protein>
    <recommendedName>
        <fullName evidence="2">Methyltransferase sdnD</fullName>
        <ecNumber evidence="4">2.1.1.-</ecNumber>
    </recommendedName>
    <alternativeName>
        <fullName evidence="2">Sordarin/hypoxysordarin biosynthesis cluster protein D</fullName>
    </alternativeName>
</protein>
<accession>A0A1B4XBG9</accession>
<organism>
    <name type="scientific">Sordaria araneosa</name>
    <name type="common">Pleurage araneosa</name>
    <dbReference type="NCBI Taxonomy" id="573841"/>
    <lineage>
        <taxon>Eukaryota</taxon>
        <taxon>Fungi</taxon>
        <taxon>Dikarya</taxon>
        <taxon>Ascomycota</taxon>
        <taxon>Pezizomycotina</taxon>
        <taxon>Sordariomycetes</taxon>
        <taxon>Sordariomycetidae</taxon>
        <taxon>Sordariales</taxon>
        <taxon>Sordariaceae</taxon>
        <taxon>Sordaria</taxon>
    </lineage>
</organism>
<dbReference type="EC" id="2.1.1.-" evidence="4"/>
<dbReference type="EMBL" id="LC079035">
    <property type="protein sequence ID" value="BAV32148.1"/>
    <property type="molecule type" value="Genomic_DNA"/>
</dbReference>
<dbReference type="GO" id="GO:0008168">
    <property type="term" value="F:methyltransferase activity"/>
    <property type="evidence" value="ECO:0007669"/>
    <property type="project" value="UniProtKB-KW"/>
</dbReference>
<dbReference type="GO" id="GO:0017000">
    <property type="term" value="P:antibiotic biosynthetic process"/>
    <property type="evidence" value="ECO:0007669"/>
    <property type="project" value="UniProtKB-KW"/>
</dbReference>
<dbReference type="GO" id="GO:0032259">
    <property type="term" value="P:methylation"/>
    <property type="evidence" value="ECO:0007669"/>
    <property type="project" value="UniProtKB-KW"/>
</dbReference>
<dbReference type="Gene3D" id="3.40.50.150">
    <property type="entry name" value="Vaccinia Virus protein VP39"/>
    <property type="match status" value="1"/>
</dbReference>
<dbReference type="InterPro" id="IPR006342">
    <property type="entry name" value="FkbM_mtfrase"/>
</dbReference>
<dbReference type="InterPro" id="IPR052514">
    <property type="entry name" value="SAM-dependent_MTase"/>
</dbReference>
<dbReference type="InterPro" id="IPR029063">
    <property type="entry name" value="SAM-dependent_MTases_sf"/>
</dbReference>
<dbReference type="NCBIfam" id="TIGR01444">
    <property type="entry name" value="fkbM_fam"/>
    <property type="match status" value="1"/>
</dbReference>
<dbReference type="PANTHER" id="PTHR34203:SF13">
    <property type="entry name" value="EXPRESSED PROTEIN"/>
    <property type="match status" value="1"/>
</dbReference>
<dbReference type="PANTHER" id="PTHR34203">
    <property type="entry name" value="METHYLTRANSFERASE, FKBM FAMILY PROTEIN"/>
    <property type="match status" value="1"/>
</dbReference>
<dbReference type="Pfam" id="PF05050">
    <property type="entry name" value="Methyltransf_21"/>
    <property type="match status" value="1"/>
</dbReference>
<dbReference type="SUPFAM" id="SSF53335">
    <property type="entry name" value="S-adenosyl-L-methionine-dependent methyltransferases"/>
    <property type="match status" value="1"/>
</dbReference>
<evidence type="ECO:0000269" key="1">
    <source>
    </source>
</evidence>
<evidence type="ECO:0000303" key="2">
    <source>
    </source>
</evidence>
<evidence type="ECO:0000305" key="3"/>
<evidence type="ECO:0000305" key="4">
    <source>
    </source>
</evidence>
<proteinExistence type="inferred from homology"/>
<reference key="1">
    <citation type="journal article" date="2016" name="J. Antibiot.">
        <title>Genome mining of the sordarin biosynthetic gene cluster from Sordaria araneosa Cain ATCC 36386: characterization of cycloaraneosene synthase and GDP-6-deoxyaltrose transferase.</title>
        <authorList>
            <person name="Kudo F."/>
            <person name="Matsuura Y."/>
            <person name="Hayashi T."/>
            <person name="Fukushima M."/>
            <person name="Eguchi T."/>
        </authorList>
    </citation>
    <scope>NUCLEOTIDE SEQUENCE [GENOMIC DNA]</scope>
    <scope>FUNCTION</scope>
    <scope>PATHWAY</scope>
    <source>
        <strain>ATCC 36386 / NRRL 3196</strain>
    </source>
</reference>
<sequence length="259" mass="29175">MAVTNTPELIEADRLSYYAISKIEAQFIYKEIFTDHCYDIANLPSNPFIVDAGANIGLFSLYMKRKYPQAKILAFEPAPVCYDVLSRNLALNDALSGVKALQCGLSSSAGTLPLTYFPNLPGNSTLVPEEKNKLYEEAVRKRGKETADERFGGAVKVDVELKRLSDVLREYYPDGKPDQGLERIDLLKVDVEGAELEVLKGVDEEHWELVRNVVVETWEPSGIRPQIEALLEDKGFDITRDRAEWAPDQFSMITARRQD</sequence>
<gene>
    <name evidence="2" type="primary">sdnD</name>
</gene>
<keyword id="KW-0045">Antibiotic biosynthesis</keyword>
<keyword id="KW-0489">Methyltransferase</keyword>
<keyword id="KW-0808">Transferase</keyword>
<feature type="chain" id="PRO_0000441056" description="Methyltransferase sdnD">
    <location>
        <begin position="1"/>
        <end position="259"/>
    </location>
</feature>
<comment type="function">
    <text evidence="1">Methyltransferase; part of the gene cluster that mediates the biosynthesis of sordarin and hypoxysordarin, glycoside antibiotics with a unique tetracyclic diterpene aglycone structure (PubMed:27072286). First, the geranylgeranyl diphosphate synthase sdnC constructs GGDP from farnesyl diphosphate and isopentenyl diphosphate (PubMed:27072286). The diterpene cyclase sdnA then catalyzes the cyclization of GGDP to afford cycloaraneosene (PubMed:27072286). Cycloaraneosene is then hydroxylated four times by the putative cytochrome P450 monooxygenases sdnB, sdnE, sdnF and sdnH to give a hydroxylated cycloaraneosene derivative such as cycloaraneosene-8,9,13,19-tetraol (PubMed:27072286). Although the order of the hydroxylations is unclear, at least C8, C9 and C13 of the cycloaraneosene skeleton are hydroxylated before the sordaricin formation (PubMed:27072286). Dehydration of the 13-hydroxy group of the hydroxylated cycloaraneosene derivative might be catalyzed by an unassigned hypothetical protein such as sdnG and sdnP to construct the cyclopentadiene moiety (PubMed:27072286). The FAD-dependent oxidoreductase sdnN is proposed to catalyze the oxidation at C9 of the hydroxylated cycloaraneosene derivative and also catalyze the Baeyer-Villiger oxidation to give the lactone intermediate (PubMed:27072286). The presumed lactone intermediate would be hydrolyzed to give an acrolein moiety and a carboxylate moiety (PubMed:27072286). Then, [4+2]cycloaddition would occur between the acrolein moiety and the cyclopentadiene moiety to give sordaricin (PubMed:27072286). SdnN might also be involved in the [4+2]cycloaddition after the hypothesized oxidation to accommodate the oxidized product and prompt the [4+2]cycloaddition (PubMed:27072286). GDP-6-deoxy-D-altrose may be biosynthesized from GDP-D-mannose by the putative GDP-mannose-4,6-dehydratase sdnI and the short-chain dehydrogenase sdnK (PubMed:27072286). The glycosyltransferase sdnJ catalyzes the attachment of 6-deoxy-D-altrose onto the 19-hydroxy group of sordaricin to give 4'-O-demethylsordarin (PubMed:27072286). The methyltransferase sdnD would complete the biosynthesis of sordarin (PubMed:27072286). Sordarin can be further modified into hypoxysordarin (PubMed:27072286). The unique acyl chain at the 3'-hydroxy group of hypoxysordarin would be constructed by an iterative type I PKS sdnO and the trans-acting polyketide methyltransferase sdnL. SdnL would be responsible for the introduction of an alpha-methyl group of the polyketide chain (PubMed:27072286). Alternatively, the beta-lactamase-like protein sdnR might be responsible for the cleavage and transfer of the polyketide chain from the PKS sdnO to sordarin (PubMed:27072286). Two putative cytochrome P450 monooxygenases, sdnQ and sdnT, might catalyze the epoxidations of the polyketide chain to complete the biosynthesis of hypoxysordarin (PubMed:27072286). Transcriptional regulators sdnM and sdnS are presumably encoded for the transcriptional regulation of the expression of the sdn gene cluster (PubMed:27072286).</text>
</comment>
<comment type="pathway">
    <text evidence="4">Antibiotic biosynthesis.</text>
</comment>
<comment type="similarity">
    <text evidence="3">Belongs to the FkbM methyltransferase family.</text>
</comment>